<reference key="1">
    <citation type="journal article" date="1999" name="Nature">
        <title>Sequence and analysis of chromosome 4 of the plant Arabidopsis thaliana.</title>
        <authorList>
            <person name="Mayer K.F.X."/>
            <person name="Schueller C."/>
            <person name="Wambutt R."/>
            <person name="Murphy G."/>
            <person name="Volckaert G."/>
            <person name="Pohl T."/>
            <person name="Duesterhoeft A."/>
            <person name="Stiekema W."/>
            <person name="Entian K.-D."/>
            <person name="Terryn N."/>
            <person name="Harris B."/>
            <person name="Ansorge W."/>
            <person name="Brandt P."/>
            <person name="Grivell L.A."/>
            <person name="Rieger M."/>
            <person name="Weichselgartner M."/>
            <person name="de Simone V."/>
            <person name="Obermaier B."/>
            <person name="Mache R."/>
            <person name="Mueller M."/>
            <person name="Kreis M."/>
            <person name="Delseny M."/>
            <person name="Puigdomenech P."/>
            <person name="Watson M."/>
            <person name="Schmidtheini T."/>
            <person name="Reichert B."/>
            <person name="Portetelle D."/>
            <person name="Perez-Alonso M."/>
            <person name="Boutry M."/>
            <person name="Bancroft I."/>
            <person name="Vos P."/>
            <person name="Hoheisel J."/>
            <person name="Zimmermann W."/>
            <person name="Wedler H."/>
            <person name="Ridley P."/>
            <person name="Langham S.-A."/>
            <person name="McCullagh B."/>
            <person name="Bilham L."/>
            <person name="Robben J."/>
            <person name="van der Schueren J."/>
            <person name="Grymonprez B."/>
            <person name="Chuang Y.-J."/>
            <person name="Vandenbussche F."/>
            <person name="Braeken M."/>
            <person name="Weltjens I."/>
            <person name="Voet M."/>
            <person name="Bastiaens I."/>
            <person name="Aert R."/>
            <person name="Defoor E."/>
            <person name="Weitzenegger T."/>
            <person name="Bothe G."/>
            <person name="Ramsperger U."/>
            <person name="Hilbert H."/>
            <person name="Braun M."/>
            <person name="Holzer E."/>
            <person name="Brandt A."/>
            <person name="Peters S."/>
            <person name="van Staveren M."/>
            <person name="Dirkse W."/>
            <person name="Mooijman P."/>
            <person name="Klein Lankhorst R."/>
            <person name="Rose M."/>
            <person name="Hauf J."/>
            <person name="Koetter P."/>
            <person name="Berneiser S."/>
            <person name="Hempel S."/>
            <person name="Feldpausch M."/>
            <person name="Lamberth S."/>
            <person name="Van den Daele H."/>
            <person name="De Keyser A."/>
            <person name="Buysshaert C."/>
            <person name="Gielen J."/>
            <person name="Villarroel R."/>
            <person name="De Clercq R."/>
            <person name="van Montagu M."/>
            <person name="Rogers J."/>
            <person name="Cronin A."/>
            <person name="Quail M.A."/>
            <person name="Bray-Allen S."/>
            <person name="Clark L."/>
            <person name="Doggett J."/>
            <person name="Hall S."/>
            <person name="Kay M."/>
            <person name="Lennard N."/>
            <person name="McLay K."/>
            <person name="Mayes R."/>
            <person name="Pettett A."/>
            <person name="Rajandream M.A."/>
            <person name="Lyne M."/>
            <person name="Benes V."/>
            <person name="Rechmann S."/>
            <person name="Borkova D."/>
            <person name="Bloecker H."/>
            <person name="Scharfe M."/>
            <person name="Grimm M."/>
            <person name="Loehnert T.-H."/>
            <person name="Dose S."/>
            <person name="de Haan M."/>
            <person name="Maarse A.C."/>
            <person name="Schaefer M."/>
            <person name="Mueller-Auer S."/>
            <person name="Gabel C."/>
            <person name="Fuchs M."/>
            <person name="Fartmann B."/>
            <person name="Granderath K."/>
            <person name="Dauner D."/>
            <person name="Herzl A."/>
            <person name="Neumann S."/>
            <person name="Argiriou A."/>
            <person name="Vitale D."/>
            <person name="Liguori R."/>
            <person name="Piravandi E."/>
            <person name="Massenet O."/>
            <person name="Quigley F."/>
            <person name="Clabauld G."/>
            <person name="Muendlein A."/>
            <person name="Felber R."/>
            <person name="Schnabl S."/>
            <person name="Hiller R."/>
            <person name="Schmidt W."/>
            <person name="Lecharny A."/>
            <person name="Aubourg S."/>
            <person name="Chefdor F."/>
            <person name="Cooke R."/>
            <person name="Berger C."/>
            <person name="Monfort A."/>
            <person name="Casacuberta E."/>
            <person name="Gibbons T."/>
            <person name="Weber N."/>
            <person name="Vandenbol M."/>
            <person name="Bargues M."/>
            <person name="Terol J."/>
            <person name="Torres A."/>
            <person name="Perez-Perez A."/>
            <person name="Purnelle B."/>
            <person name="Bent E."/>
            <person name="Johnson S."/>
            <person name="Tacon D."/>
            <person name="Jesse T."/>
            <person name="Heijnen L."/>
            <person name="Schwarz S."/>
            <person name="Scholler P."/>
            <person name="Heber S."/>
            <person name="Francs P."/>
            <person name="Bielke C."/>
            <person name="Frishman D."/>
            <person name="Haase D."/>
            <person name="Lemcke K."/>
            <person name="Mewes H.-W."/>
            <person name="Stocker S."/>
            <person name="Zaccaria P."/>
            <person name="Bevan M."/>
            <person name="Wilson R.K."/>
            <person name="de la Bastide M."/>
            <person name="Habermann K."/>
            <person name="Parnell L."/>
            <person name="Dedhia N."/>
            <person name="Gnoj L."/>
            <person name="Schutz K."/>
            <person name="Huang E."/>
            <person name="Spiegel L."/>
            <person name="Sekhon M."/>
            <person name="Murray J."/>
            <person name="Sheet P."/>
            <person name="Cordes M."/>
            <person name="Abu-Threideh J."/>
            <person name="Stoneking T."/>
            <person name="Kalicki J."/>
            <person name="Graves T."/>
            <person name="Harmon G."/>
            <person name="Edwards J."/>
            <person name="Latreille P."/>
            <person name="Courtney L."/>
            <person name="Cloud J."/>
            <person name="Abbott A."/>
            <person name="Scott K."/>
            <person name="Johnson D."/>
            <person name="Minx P."/>
            <person name="Bentley D."/>
            <person name="Fulton B."/>
            <person name="Miller N."/>
            <person name="Greco T."/>
            <person name="Kemp K."/>
            <person name="Kramer J."/>
            <person name="Fulton L."/>
            <person name="Mardis E."/>
            <person name="Dante M."/>
            <person name="Pepin K."/>
            <person name="Hillier L.W."/>
            <person name="Nelson J."/>
            <person name="Spieth J."/>
            <person name="Ryan E."/>
            <person name="Andrews S."/>
            <person name="Geisel C."/>
            <person name="Layman D."/>
            <person name="Du H."/>
            <person name="Ali J."/>
            <person name="Berghoff A."/>
            <person name="Jones K."/>
            <person name="Drone K."/>
            <person name="Cotton M."/>
            <person name="Joshu C."/>
            <person name="Antonoiu B."/>
            <person name="Zidanic M."/>
            <person name="Strong C."/>
            <person name="Sun H."/>
            <person name="Lamar B."/>
            <person name="Yordan C."/>
            <person name="Ma P."/>
            <person name="Zhong J."/>
            <person name="Preston R."/>
            <person name="Vil D."/>
            <person name="Shekher M."/>
            <person name="Matero A."/>
            <person name="Shah R."/>
            <person name="Swaby I.K."/>
            <person name="O'Shaughnessy A."/>
            <person name="Rodriguez M."/>
            <person name="Hoffman J."/>
            <person name="Till S."/>
            <person name="Granat S."/>
            <person name="Shohdy N."/>
            <person name="Hasegawa A."/>
            <person name="Hameed A."/>
            <person name="Lodhi M."/>
            <person name="Johnson A."/>
            <person name="Chen E."/>
            <person name="Marra M.A."/>
            <person name="Martienssen R."/>
            <person name="McCombie W.R."/>
        </authorList>
    </citation>
    <scope>NUCLEOTIDE SEQUENCE [LARGE SCALE GENOMIC DNA]</scope>
    <source>
        <strain>cv. Columbia</strain>
    </source>
</reference>
<reference key="2">
    <citation type="journal article" date="2017" name="Plant J.">
        <title>Araport11: a complete reannotation of the Arabidopsis thaliana reference genome.</title>
        <authorList>
            <person name="Cheng C.Y."/>
            <person name="Krishnakumar V."/>
            <person name="Chan A.P."/>
            <person name="Thibaud-Nissen F."/>
            <person name="Schobel S."/>
            <person name="Town C.D."/>
        </authorList>
    </citation>
    <scope>GENOME REANNOTATION</scope>
    <source>
        <strain>cv. Columbia</strain>
    </source>
</reference>
<reference key="3">
    <citation type="journal article" date="2001" name="J. Biol. Chem.">
        <title>The Arabidopsis thaliana ABC protein superfamily, a complete inventory.</title>
        <authorList>
            <person name="Sanchez-Fernandez R."/>
            <person name="Davies T.G."/>
            <person name="Coleman J.O."/>
            <person name="Rea P.A."/>
        </authorList>
    </citation>
    <scope>GENE FAMILY</scope>
    <scope>NOMENCLATURE</scope>
</reference>
<reference key="4">
    <citation type="journal article" date="2008" name="Trends Plant Sci.">
        <title>Plant ABC proteins - a unified nomenclature and updated inventory.</title>
        <authorList>
            <person name="Verrier P.J."/>
            <person name="Bird D."/>
            <person name="Burla B."/>
            <person name="Dassa E."/>
            <person name="Forestier C."/>
            <person name="Geisler M."/>
            <person name="Klein M."/>
            <person name="Kolukisaoglu H.U."/>
            <person name="Lee Y."/>
            <person name="Martinoia E."/>
            <person name="Murphy A."/>
            <person name="Rea P.A."/>
            <person name="Samuels L."/>
            <person name="Schulz B."/>
            <person name="Spalding E.J."/>
            <person name="Yazaki K."/>
            <person name="Theodoulou F.L."/>
        </authorList>
    </citation>
    <scope>GENE FAMILY</scope>
    <scope>NOMENCLATURE</scope>
</reference>
<comment type="subcellular location">
    <subcellularLocation>
        <location evidence="3">Membrane</location>
        <topology evidence="3">Multi-pass membrane protein</topology>
    </subcellularLocation>
</comment>
<comment type="similarity">
    <text evidence="5">Belongs to the ABC transporter superfamily. ABCB family. Multidrug resistance exporter (TC 3.A.1.201) subfamily.</text>
</comment>
<dbReference type="EMBL" id="AC007138">
    <property type="protein sequence ID" value="AAD22645.1"/>
    <property type="molecule type" value="Genomic_DNA"/>
</dbReference>
<dbReference type="EMBL" id="AL161493">
    <property type="protein sequence ID" value="CAB80676.1"/>
    <property type="molecule type" value="Genomic_DNA"/>
</dbReference>
<dbReference type="EMBL" id="CP002687">
    <property type="protein sequence ID" value="AEE82082.1"/>
    <property type="molecule type" value="Genomic_DNA"/>
</dbReference>
<dbReference type="PIR" id="E85023">
    <property type="entry name" value="E85023"/>
</dbReference>
<dbReference type="RefSeq" id="NP_192092.1">
    <property type="nucleotide sequence ID" value="NM_116413.2"/>
</dbReference>
<dbReference type="SMR" id="Q9SYI3"/>
<dbReference type="FunCoup" id="Q9SYI3">
    <property type="interactions" value="269"/>
</dbReference>
<dbReference type="STRING" id="3702.Q9SYI3"/>
<dbReference type="GlyCosmos" id="Q9SYI3">
    <property type="glycosylation" value="7 sites, No reported glycans"/>
</dbReference>
<dbReference type="GlyGen" id="Q9SYI3">
    <property type="glycosylation" value="7 sites"/>
</dbReference>
<dbReference type="PaxDb" id="3702-AT4G01830.1"/>
<dbReference type="EnsemblPlants" id="AT4G01830.1">
    <property type="protein sequence ID" value="AT4G01830.1"/>
    <property type="gene ID" value="AT4G01830"/>
</dbReference>
<dbReference type="GeneID" id="826974"/>
<dbReference type="Gramene" id="AT4G01830.1">
    <property type="protein sequence ID" value="AT4G01830.1"/>
    <property type="gene ID" value="AT4G01830"/>
</dbReference>
<dbReference type="KEGG" id="ath:AT4G01830"/>
<dbReference type="Araport" id="AT4G01830"/>
<dbReference type="TAIR" id="AT4G01830">
    <property type="gene designation" value="ABCB5"/>
</dbReference>
<dbReference type="eggNOG" id="KOG0055">
    <property type="taxonomic scope" value="Eukaryota"/>
</dbReference>
<dbReference type="HOGENOM" id="CLU_000604_17_8_1"/>
<dbReference type="InParanoid" id="Q9SYI3"/>
<dbReference type="OMA" id="QRIAYHE"/>
<dbReference type="PhylomeDB" id="Q9SYI3"/>
<dbReference type="BioCyc" id="ARA:AT4G01830-MONOMER"/>
<dbReference type="PRO" id="PR:Q9SYI3"/>
<dbReference type="Proteomes" id="UP000006548">
    <property type="component" value="Chromosome 4"/>
</dbReference>
<dbReference type="ExpressionAtlas" id="Q9SYI3">
    <property type="expression patterns" value="baseline and differential"/>
</dbReference>
<dbReference type="GO" id="GO:0005829">
    <property type="term" value="C:cytosol"/>
    <property type="evidence" value="ECO:0007005"/>
    <property type="project" value="TAIR"/>
</dbReference>
<dbReference type="GO" id="GO:0016020">
    <property type="term" value="C:membrane"/>
    <property type="evidence" value="ECO:0007669"/>
    <property type="project" value="UniProtKB-SubCell"/>
</dbReference>
<dbReference type="GO" id="GO:0140359">
    <property type="term" value="F:ABC-type transporter activity"/>
    <property type="evidence" value="ECO:0007669"/>
    <property type="project" value="InterPro"/>
</dbReference>
<dbReference type="GO" id="GO:0005524">
    <property type="term" value="F:ATP binding"/>
    <property type="evidence" value="ECO:0007669"/>
    <property type="project" value="UniProtKB-KW"/>
</dbReference>
<dbReference type="GO" id="GO:0016887">
    <property type="term" value="F:ATP hydrolysis activity"/>
    <property type="evidence" value="ECO:0007669"/>
    <property type="project" value="InterPro"/>
</dbReference>
<dbReference type="CDD" id="cd18577">
    <property type="entry name" value="ABC_6TM_Pgp_ABCB1_D1_like"/>
    <property type="match status" value="1"/>
</dbReference>
<dbReference type="CDD" id="cd18578">
    <property type="entry name" value="ABC_6TM_Pgp_ABCB1_D2_like"/>
    <property type="match status" value="1"/>
</dbReference>
<dbReference type="CDD" id="cd03249">
    <property type="entry name" value="ABC_MTABC3_MDL1_MDL2"/>
    <property type="match status" value="2"/>
</dbReference>
<dbReference type="FunFam" id="1.20.1560.10:FF:000009">
    <property type="entry name" value="ABC transporter B family member 1"/>
    <property type="match status" value="1"/>
</dbReference>
<dbReference type="FunFam" id="3.40.50.300:FF:000066">
    <property type="entry name" value="ABC transporter B family member 1"/>
    <property type="match status" value="2"/>
</dbReference>
<dbReference type="FunFam" id="1.20.1560.10:FF:000044">
    <property type="entry name" value="ABC transporter B family member 9"/>
    <property type="match status" value="1"/>
</dbReference>
<dbReference type="Gene3D" id="1.20.1560.10">
    <property type="entry name" value="ABC transporter type 1, transmembrane domain"/>
    <property type="match status" value="1"/>
</dbReference>
<dbReference type="Gene3D" id="3.40.50.300">
    <property type="entry name" value="P-loop containing nucleotide triphosphate hydrolases"/>
    <property type="match status" value="2"/>
</dbReference>
<dbReference type="InterPro" id="IPR003593">
    <property type="entry name" value="AAA+_ATPase"/>
</dbReference>
<dbReference type="InterPro" id="IPR011527">
    <property type="entry name" value="ABC1_TM_dom"/>
</dbReference>
<dbReference type="InterPro" id="IPR036640">
    <property type="entry name" value="ABC1_TM_sf"/>
</dbReference>
<dbReference type="InterPro" id="IPR003439">
    <property type="entry name" value="ABC_transporter-like_ATP-bd"/>
</dbReference>
<dbReference type="InterPro" id="IPR017871">
    <property type="entry name" value="ABC_transporter-like_CS"/>
</dbReference>
<dbReference type="InterPro" id="IPR027417">
    <property type="entry name" value="P-loop_NTPase"/>
</dbReference>
<dbReference type="InterPro" id="IPR039421">
    <property type="entry name" value="Type_1_exporter"/>
</dbReference>
<dbReference type="PANTHER" id="PTHR43394:SF16">
    <property type="entry name" value="ABC TRANSPORTER B FAMILY MEMBER 4-LIKE ISOFORM X1"/>
    <property type="match status" value="1"/>
</dbReference>
<dbReference type="PANTHER" id="PTHR43394">
    <property type="entry name" value="ATP-DEPENDENT PERMEASE MDL1, MITOCHONDRIAL"/>
    <property type="match status" value="1"/>
</dbReference>
<dbReference type="Pfam" id="PF00664">
    <property type="entry name" value="ABC_membrane"/>
    <property type="match status" value="2"/>
</dbReference>
<dbReference type="Pfam" id="PF00005">
    <property type="entry name" value="ABC_tran"/>
    <property type="match status" value="2"/>
</dbReference>
<dbReference type="SMART" id="SM00382">
    <property type="entry name" value="AAA"/>
    <property type="match status" value="2"/>
</dbReference>
<dbReference type="SUPFAM" id="SSF90123">
    <property type="entry name" value="ABC transporter transmembrane region"/>
    <property type="match status" value="2"/>
</dbReference>
<dbReference type="SUPFAM" id="SSF52540">
    <property type="entry name" value="P-loop containing nucleoside triphosphate hydrolases"/>
    <property type="match status" value="2"/>
</dbReference>
<dbReference type="PROSITE" id="PS50929">
    <property type="entry name" value="ABC_TM1F"/>
    <property type="match status" value="2"/>
</dbReference>
<dbReference type="PROSITE" id="PS00211">
    <property type="entry name" value="ABC_TRANSPORTER_1"/>
    <property type="match status" value="2"/>
</dbReference>
<dbReference type="PROSITE" id="PS50893">
    <property type="entry name" value="ABC_TRANSPORTER_2"/>
    <property type="match status" value="2"/>
</dbReference>
<feature type="chain" id="PRO_0000227916" description="ABC transporter B family member 5">
    <location>
        <begin position="1"/>
        <end position="1230"/>
    </location>
</feature>
<feature type="transmembrane region" description="Helical" evidence="3">
    <location>
        <begin position="27"/>
        <end position="47"/>
    </location>
</feature>
<feature type="transmembrane region" description="Helical" evidence="3">
    <location>
        <begin position="78"/>
        <end position="98"/>
    </location>
</feature>
<feature type="transmembrane region" description="Helical" evidence="3">
    <location>
        <begin position="154"/>
        <end position="174"/>
    </location>
</feature>
<feature type="transmembrane region" description="Helical" evidence="3">
    <location>
        <begin position="177"/>
        <end position="197"/>
    </location>
</feature>
<feature type="transmembrane region" description="Helical" evidence="3">
    <location>
        <begin position="253"/>
        <end position="273"/>
    </location>
</feature>
<feature type="transmembrane region" description="Helical" evidence="3">
    <location>
        <begin position="286"/>
        <end position="306"/>
    </location>
</feature>
<feature type="transmembrane region" description="Helical" evidence="3">
    <location>
        <begin position="662"/>
        <end position="682"/>
    </location>
</feature>
<feature type="transmembrane region" description="Helical" evidence="3">
    <location>
        <begin position="707"/>
        <end position="727"/>
    </location>
</feature>
<feature type="transmembrane region" description="Helical" evidence="3">
    <location>
        <begin position="798"/>
        <end position="818"/>
    </location>
</feature>
<feature type="transmembrane region" description="Helical" evidence="3">
    <location>
        <begin position="889"/>
        <end position="909"/>
    </location>
</feature>
<feature type="transmembrane region" description="Helical" evidence="3">
    <location>
        <begin position="924"/>
        <end position="944"/>
    </location>
</feature>
<feature type="domain" description="ABC transmembrane type-1 1" evidence="3">
    <location>
        <begin position="30"/>
        <end position="318"/>
    </location>
</feature>
<feature type="domain" description="ABC transporter 1" evidence="2">
    <location>
        <begin position="353"/>
        <end position="589"/>
    </location>
</feature>
<feature type="domain" description="ABC transmembrane type-1 2" evidence="3">
    <location>
        <begin position="663"/>
        <end position="950"/>
    </location>
</feature>
<feature type="domain" description="ABC transporter 2" evidence="2">
    <location>
        <begin position="985"/>
        <end position="1223"/>
    </location>
</feature>
<feature type="region of interest" description="Disordered" evidence="4">
    <location>
        <begin position="602"/>
        <end position="621"/>
    </location>
</feature>
<feature type="compositionally biased region" description="Low complexity" evidence="4">
    <location>
        <begin position="603"/>
        <end position="617"/>
    </location>
</feature>
<feature type="binding site" evidence="2">
    <location>
        <begin position="388"/>
        <end position="395"/>
    </location>
    <ligand>
        <name>ATP</name>
        <dbReference type="ChEBI" id="CHEBI:30616"/>
        <label>1</label>
    </ligand>
</feature>
<feature type="binding site" evidence="2">
    <location>
        <begin position="1020"/>
        <end position="1027"/>
    </location>
    <ligand>
        <name>ATP</name>
        <dbReference type="ChEBI" id="CHEBI:30616"/>
        <label>2</label>
    </ligand>
</feature>
<feature type="glycosylation site" description="N-linked (GlcNAc...) asparagine" evidence="1">
    <location>
        <position position="540"/>
    </location>
</feature>
<feature type="glycosylation site" description="N-linked (GlcNAc...) asparagine" evidence="1">
    <location>
        <position position="615"/>
    </location>
</feature>
<feature type="glycosylation site" description="N-linked (GlcNAc...) asparagine" evidence="1">
    <location>
        <position position="616"/>
    </location>
</feature>
<feature type="glycosylation site" description="N-linked (GlcNAc...) asparagine" evidence="1">
    <location>
        <position position="759"/>
    </location>
</feature>
<feature type="glycosylation site" description="N-linked (GlcNAc...) asparagine" evidence="1">
    <location>
        <position position="1074"/>
    </location>
</feature>
<feature type="glycosylation site" description="N-linked (GlcNAc...) asparagine" evidence="1">
    <location>
        <position position="1174"/>
    </location>
</feature>
<feature type="glycosylation site" description="N-linked (GlcNAc...) asparagine" evidence="1">
    <location>
        <position position="1227"/>
    </location>
</feature>
<name>AB5B_ARATH</name>
<organism>
    <name type="scientific">Arabidopsis thaliana</name>
    <name type="common">Mouse-ear cress</name>
    <dbReference type="NCBI Taxonomy" id="3702"/>
    <lineage>
        <taxon>Eukaryota</taxon>
        <taxon>Viridiplantae</taxon>
        <taxon>Streptophyta</taxon>
        <taxon>Embryophyta</taxon>
        <taxon>Tracheophyta</taxon>
        <taxon>Spermatophyta</taxon>
        <taxon>Magnoliopsida</taxon>
        <taxon>eudicotyledons</taxon>
        <taxon>Gunneridae</taxon>
        <taxon>Pentapetalae</taxon>
        <taxon>rosids</taxon>
        <taxon>malvids</taxon>
        <taxon>Brassicales</taxon>
        <taxon>Brassicaceae</taxon>
        <taxon>Camelineae</taxon>
        <taxon>Arabidopsis</taxon>
    </lineage>
</organism>
<accession>Q9SYI3</accession>
<keyword id="KW-0067">ATP-binding</keyword>
<keyword id="KW-0325">Glycoprotein</keyword>
<keyword id="KW-0472">Membrane</keyword>
<keyword id="KW-0547">Nucleotide-binding</keyword>
<keyword id="KW-1185">Reference proteome</keyword>
<keyword id="KW-0677">Repeat</keyword>
<keyword id="KW-0812">Transmembrane</keyword>
<keyword id="KW-1133">Transmembrane helix</keyword>
<keyword id="KW-0813">Transport</keyword>
<gene>
    <name type="primary">ABCB5</name>
    <name type="synonym">MDR5</name>
    <name type="synonym">PGP5</name>
    <name type="ordered locus">At4g01830</name>
    <name type="ORF">T7B11.9</name>
</gene>
<proteinExistence type="inferred from homology"/>
<protein>
    <recommendedName>
        <fullName>ABC transporter B family member 5</fullName>
        <shortName>ABC transporter ABCB.5</shortName>
        <shortName>AtABCB5</shortName>
    </recommendedName>
    <alternativeName>
        <fullName>P-glycoprotein 5</fullName>
    </alternativeName>
    <alternativeName>
        <fullName>Putative multidrug resistance protein 5</fullName>
    </alternativeName>
</protein>
<sequence length="1230" mass="133083">MKKGNLEANTKTVPFYKLFFFSDSTDVLLMIVGSIGAIANGVCSPLMTLLFGELIDAMGPNQNNEEIVERVSKVCLSLVYLGLGALGAAFLQVACWMITGERQAARIRSLYLKTILRQDIGFFDVEMTTGEVVGRMSGDTVLILDAMGEKVGKFIQLISTFVGGFVIAFLRGWLLTLVMLTSIPLLAMSGAAIAIIVTRASSQEQAAYAKASNVVEQTLGSIRTVASFTGEKQAMSSYKELINLAYKSNVKQGFVTGLGLGVMFLVFFSTYALGTWFGGEMILRKGYTGGAVINVMVTVVSSSIALGQASPCLTAFTAGKAAAYKMFETIEREPLIDTFDLNGKVLEDIRGEIELRDVCFSYPARPKEEVFGGFSLLIPSGTTTALVGESGSGKSTVISLIERFYDPNSGQVLIDGVDLKEFQLKWIRGKIGLVSQEPVLFSSSIMENIGYGKEGATVEEIQAASKLANAAKFIDKLPLGLETLVGEHGTQLSGGQKQRIAIARAILKDPRILLLDEATSALDAESERVVQEALDRIMVNRTTVIVAHRLSTVRNADIIAVIHRGKIVEEGSHSELLKDHEGAYSQLLRLQEINKESKRLEISDGSISSGSSRGNNSTRQDDDSFSVLGLLAGQDSTKMSQELSQKVSFTRIAALNKPEIPILILGTLVGAVNGTIFPIFGILFAKVIEAFFKAPHELKRDSRFWSMIFVLLGVAAVIVYPTTNYLFAIAGGRLIRRIRSMCFEKVVHMEVGWFDEPGNSSGAMGARLSADAALIRTLVGDSLCLSVKNVASLVTGLIIAFTASWEVAIIILVIIPFIGINGYIQIKFMKGFSADAKAKYEEASQVANDAVGSIRTVASFCAEEKVMEMYKKRCEDTIKSGIKQGLISGVGFGISFFVLYSVYASCFYVGARLVKAGRTNFNDVFQVFLALTLTAVGISQASSFAPDSSKGKGAAVSIFRIIDRISKIDSRDESGMVLENVKGDIELCHISFTYQTRPDVQVFRDLCLSIRAGQTVALVGESGSGKSTVISLLQRFYDPDSGHITLDGVELKKLRLKWLRQQMGLVGQEPVLFNDTIRANIAYGKGGEEATEAEIIAASELANAHRFISSIQKGYDTVVGERGIQLSGGQKQRVAIARAIVKEPKILLLDEATSALDAESERVVQDALDRVMVNRTTIVVAHRLSTIKNADVIAVVKNGVIAEKGTHETLINIEGGVYASLVQLHINASN</sequence>
<evidence type="ECO:0000255" key="1"/>
<evidence type="ECO:0000255" key="2">
    <source>
        <dbReference type="PROSITE-ProRule" id="PRU00434"/>
    </source>
</evidence>
<evidence type="ECO:0000255" key="3">
    <source>
        <dbReference type="PROSITE-ProRule" id="PRU00441"/>
    </source>
</evidence>
<evidence type="ECO:0000256" key="4">
    <source>
        <dbReference type="SAM" id="MobiDB-lite"/>
    </source>
</evidence>
<evidence type="ECO:0000305" key="5"/>